<sequence>MNRRLPLKLKELSECFRTQTLDPVSATEQILQLANRLQHLNAFIRTSPEKALAQAEKSSTRHKTGKPLSLLDGAPIAVKDNFCTKGIHTTCAARMLENFVPTYNATVYERLARNGAILVGKTNMDQYGMGSGTVDSIFGPTKNYWDAVEGESDFRIAGGSSGGSAVAVASGICFAALGSDTGGSTRNPASYCGVVGFKPTYGLLSRYGLIPLVNSMDVPGILTRTVDDCLAVFNAIAGPDDRDSTTIKTFFKPISLPDASKICLKGLKVGIPIEYHCEGLSDEVLTTWTKVADMLEDAGASVHPVSLPYTSASIFVYSILNQCEVASNMARYDGIEFGHRSDEDASTEQLYAKSRAEGFNGVVKNRILSGNFFLLRKNYDKYFEKALKVRRLIANDFDRAFQEVDILLTPTTLSDAPRYSEFIQSNNRDQCAVQDFCTQPANMGGIPALSLPIRLSEQRLPISLQLMAPNFSEKRLFKVAKWIEEQVKFETNYN</sequence>
<evidence type="ECO:0000255" key="1">
    <source>
        <dbReference type="HAMAP-Rule" id="MF_03150"/>
    </source>
</evidence>
<gene>
    <name evidence="1" type="primary">gatA</name>
    <name type="ORF">AAEL002766</name>
</gene>
<name>GATA_AEDAE</name>
<feature type="chain" id="PRO_0000413334" description="Glutamyl-tRNA(Gln) amidotransferase subunit A, mitochondrial">
    <location>
        <begin position="1"/>
        <end position="494"/>
    </location>
</feature>
<feature type="active site" description="Charge relay system" evidence="1">
    <location>
        <position position="79"/>
    </location>
</feature>
<feature type="active site" description="Charge relay system" evidence="1">
    <location>
        <position position="160"/>
    </location>
</feature>
<feature type="active site" description="Acyl-ester intermediate" evidence="1">
    <location>
        <position position="184"/>
    </location>
</feature>
<comment type="function">
    <text evidence="1">Allows the formation of correctly charged Gln-tRNA(Gln) through the transamidation of misacylated Glu-tRNA(Gln) in the mitochondria. The reaction takes place in the presence of glutamine and ATP through an activated gamma-phospho-Glu-tRNA(Gln).</text>
</comment>
<comment type="catalytic activity">
    <reaction evidence="1">
        <text>L-glutamyl-tRNA(Gln) + L-glutamine + ATP + H2O = L-glutaminyl-tRNA(Gln) + L-glutamate + ADP + phosphate + H(+)</text>
        <dbReference type="Rhea" id="RHEA:17521"/>
        <dbReference type="Rhea" id="RHEA-COMP:9681"/>
        <dbReference type="Rhea" id="RHEA-COMP:9684"/>
        <dbReference type="ChEBI" id="CHEBI:15377"/>
        <dbReference type="ChEBI" id="CHEBI:15378"/>
        <dbReference type="ChEBI" id="CHEBI:29985"/>
        <dbReference type="ChEBI" id="CHEBI:30616"/>
        <dbReference type="ChEBI" id="CHEBI:43474"/>
        <dbReference type="ChEBI" id="CHEBI:58359"/>
        <dbReference type="ChEBI" id="CHEBI:78520"/>
        <dbReference type="ChEBI" id="CHEBI:78521"/>
        <dbReference type="ChEBI" id="CHEBI:456216"/>
        <dbReference type="EC" id="6.3.5.7"/>
    </reaction>
</comment>
<comment type="subunit">
    <text evidence="1">Subunit of the heterotrimeric GatCAB amidotransferase (AdT) complex, composed of A, B and C subunits.</text>
</comment>
<comment type="subcellular location">
    <subcellularLocation>
        <location evidence="1">Mitochondrion</location>
    </subcellularLocation>
</comment>
<comment type="similarity">
    <text evidence="1">Belongs to the amidase family. GatA subfamily.</text>
</comment>
<keyword id="KW-0067">ATP-binding</keyword>
<keyword id="KW-0436">Ligase</keyword>
<keyword id="KW-0496">Mitochondrion</keyword>
<keyword id="KW-0547">Nucleotide-binding</keyword>
<keyword id="KW-0648">Protein biosynthesis</keyword>
<keyword id="KW-1185">Reference proteome</keyword>
<accession>Q17H91</accession>
<organism>
    <name type="scientific">Aedes aegypti</name>
    <name type="common">Yellowfever mosquito</name>
    <name type="synonym">Culex aegypti</name>
    <dbReference type="NCBI Taxonomy" id="7159"/>
    <lineage>
        <taxon>Eukaryota</taxon>
        <taxon>Metazoa</taxon>
        <taxon>Ecdysozoa</taxon>
        <taxon>Arthropoda</taxon>
        <taxon>Hexapoda</taxon>
        <taxon>Insecta</taxon>
        <taxon>Pterygota</taxon>
        <taxon>Neoptera</taxon>
        <taxon>Endopterygota</taxon>
        <taxon>Diptera</taxon>
        <taxon>Nematocera</taxon>
        <taxon>Culicoidea</taxon>
        <taxon>Culicidae</taxon>
        <taxon>Culicinae</taxon>
        <taxon>Aedini</taxon>
        <taxon>Aedes</taxon>
        <taxon>Stegomyia</taxon>
    </lineage>
</organism>
<proteinExistence type="inferred from homology"/>
<protein>
    <recommendedName>
        <fullName evidence="1">Glutamyl-tRNA(Gln) amidotransferase subunit A, mitochondrial</fullName>
        <shortName evidence="1">Glu-AdT subunit A</shortName>
        <ecNumber evidence="1">6.3.5.7</ecNumber>
    </recommendedName>
</protein>
<dbReference type="EC" id="6.3.5.7" evidence="1"/>
<dbReference type="EMBL" id="CH477252">
    <property type="protein sequence ID" value="EAT45998.1"/>
    <property type="molecule type" value="Genomic_DNA"/>
</dbReference>
<dbReference type="RefSeq" id="XP_001655938.1">
    <property type="nucleotide sequence ID" value="XM_001655888.1"/>
</dbReference>
<dbReference type="SMR" id="Q17H91"/>
<dbReference type="FunCoup" id="Q17H91">
    <property type="interactions" value="783"/>
</dbReference>
<dbReference type="STRING" id="7159.Q17H91"/>
<dbReference type="PaxDb" id="7159-AAEL002766-PA"/>
<dbReference type="GeneID" id="5575984"/>
<dbReference type="KEGG" id="aag:5575984"/>
<dbReference type="CTD" id="42283"/>
<dbReference type="VEuPathDB" id="VectorBase:AAEL002766"/>
<dbReference type="eggNOG" id="KOG1211">
    <property type="taxonomic scope" value="Eukaryota"/>
</dbReference>
<dbReference type="HOGENOM" id="CLU_009600_7_6_1"/>
<dbReference type="InParanoid" id="Q17H91"/>
<dbReference type="OMA" id="QPASYCG"/>
<dbReference type="OrthoDB" id="421993at2759"/>
<dbReference type="PhylomeDB" id="Q17H91"/>
<dbReference type="Proteomes" id="UP000008820">
    <property type="component" value="Unassembled WGS sequence"/>
</dbReference>
<dbReference type="Proteomes" id="UP000682892">
    <property type="component" value="Unassembled WGS sequence"/>
</dbReference>
<dbReference type="GO" id="GO:0030956">
    <property type="term" value="C:glutamyl-tRNA(Gln) amidotransferase complex"/>
    <property type="evidence" value="ECO:0007669"/>
    <property type="project" value="UniProtKB-UniRule"/>
</dbReference>
<dbReference type="GO" id="GO:0005739">
    <property type="term" value="C:mitochondrion"/>
    <property type="evidence" value="ECO:0007669"/>
    <property type="project" value="UniProtKB-SubCell"/>
</dbReference>
<dbReference type="GO" id="GO:0005524">
    <property type="term" value="F:ATP binding"/>
    <property type="evidence" value="ECO:0007669"/>
    <property type="project" value="UniProtKB-KW"/>
</dbReference>
<dbReference type="GO" id="GO:0050567">
    <property type="term" value="F:glutaminyl-tRNA synthase (glutamine-hydrolyzing) activity"/>
    <property type="evidence" value="ECO:0007669"/>
    <property type="project" value="UniProtKB-UniRule"/>
</dbReference>
<dbReference type="GO" id="GO:0070681">
    <property type="term" value="P:glutaminyl-tRNAGln biosynthesis via transamidation"/>
    <property type="evidence" value="ECO:0007669"/>
    <property type="project" value="UniProtKB-UniRule"/>
</dbReference>
<dbReference type="GO" id="GO:0032543">
    <property type="term" value="P:mitochondrial translation"/>
    <property type="evidence" value="ECO:0007669"/>
    <property type="project" value="UniProtKB-UniRule"/>
</dbReference>
<dbReference type="Gene3D" id="3.90.1300.10">
    <property type="entry name" value="Amidase signature (AS) domain"/>
    <property type="match status" value="1"/>
</dbReference>
<dbReference type="HAMAP" id="MF_00120">
    <property type="entry name" value="GatA"/>
    <property type="match status" value="1"/>
</dbReference>
<dbReference type="InterPro" id="IPR000120">
    <property type="entry name" value="Amidase"/>
</dbReference>
<dbReference type="InterPro" id="IPR023631">
    <property type="entry name" value="Amidase_dom"/>
</dbReference>
<dbReference type="InterPro" id="IPR036928">
    <property type="entry name" value="AS_sf"/>
</dbReference>
<dbReference type="InterPro" id="IPR004412">
    <property type="entry name" value="GatA"/>
</dbReference>
<dbReference type="NCBIfam" id="TIGR00132">
    <property type="entry name" value="gatA"/>
    <property type="match status" value="1"/>
</dbReference>
<dbReference type="PANTHER" id="PTHR11895:SF7">
    <property type="entry name" value="GLUTAMYL-TRNA(GLN) AMIDOTRANSFERASE SUBUNIT A, MITOCHONDRIAL"/>
    <property type="match status" value="1"/>
</dbReference>
<dbReference type="PANTHER" id="PTHR11895">
    <property type="entry name" value="TRANSAMIDASE"/>
    <property type="match status" value="1"/>
</dbReference>
<dbReference type="Pfam" id="PF01425">
    <property type="entry name" value="Amidase"/>
    <property type="match status" value="1"/>
</dbReference>
<dbReference type="SUPFAM" id="SSF75304">
    <property type="entry name" value="Amidase signature (AS) enzymes"/>
    <property type="match status" value="1"/>
</dbReference>
<reference key="1">
    <citation type="journal article" date="2007" name="Science">
        <title>Genome sequence of Aedes aegypti, a major arbovirus vector.</title>
        <authorList>
            <person name="Nene V."/>
            <person name="Wortman J.R."/>
            <person name="Lawson D."/>
            <person name="Haas B.J."/>
            <person name="Kodira C.D."/>
            <person name="Tu Z.J."/>
            <person name="Loftus B.J."/>
            <person name="Xi Z."/>
            <person name="Megy K."/>
            <person name="Grabherr M."/>
            <person name="Ren Q."/>
            <person name="Zdobnov E.M."/>
            <person name="Lobo N.F."/>
            <person name="Campbell K.S."/>
            <person name="Brown S.E."/>
            <person name="Bonaldo M.F."/>
            <person name="Zhu J."/>
            <person name="Sinkins S.P."/>
            <person name="Hogenkamp D.G."/>
            <person name="Amedeo P."/>
            <person name="Arensburger P."/>
            <person name="Atkinson P.W."/>
            <person name="Bidwell S.L."/>
            <person name="Biedler J."/>
            <person name="Birney E."/>
            <person name="Bruggner R.V."/>
            <person name="Costas J."/>
            <person name="Coy M.R."/>
            <person name="Crabtree J."/>
            <person name="Crawford M."/>
            <person name="DeBruyn B."/>
            <person name="DeCaprio D."/>
            <person name="Eiglmeier K."/>
            <person name="Eisenstadt E."/>
            <person name="El-Dorry H."/>
            <person name="Gelbart W.M."/>
            <person name="Gomes S.L."/>
            <person name="Hammond M."/>
            <person name="Hannick L.I."/>
            <person name="Hogan J.R."/>
            <person name="Holmes M.H."/>
            <person name="Jaffe D."/>
            <person name="Johnston S.J."/>
            <person name="Kennedy R.C."/>
            <person name="Koo H."/>
            <person name="Kravitz S."/>
            <person name="Kriventseva E.V."/>
            <person name="Kulp D."/>
            <person name="Labutti K."/>
            <person name="Lee E."/>
            <person name="Li S."/>
            <person name="Lovin D.D."/>
            <person name="Mao C."/>
            <person name="Mauceli E."/>
            <person name="Menck C.F."/>
            <person name="Miller J.R."/>
            <person name="Montgomery P."/>
            <person name="Mori A."/>
            <person name="Nascimento A.L."/>
            <person name="Naveira H.F."/>
            <person name="Nusbaum C."/>
            <person name="O'Leary S.B."/>
            <person name="Orvis J."/>
            <person name="Pertea M."/>
            <person name="Quesneville H."/>
            <person name="Reidenbach K.R."/>
            <person name="Rogers Y.-H.C."/>
            <person name="Roth C.W."/>
            <person name="Schneider J.R."/>
            <person name="Schatz M."/>
            <person name="Shumway M."/>
            <person name="Stanke M."/>
            <person name="Stinson E.O."/>
            <person name="Tubio J.M.C."/>
            <person name="Vanzee J.P."/>
            <person name="Verjovski-Almeida S."/>
            <person name="Werner D."/>
            <person name="White O.R."/>
            <person name="Wyder S."/>
            <person name="Zeng Q."/>
            <person name="Zhao Q."/>
            <person name="Zhao Y."/>
            <person name="Hill C.A."/>
            <person name="Raikhel A.S."/>
            <person name="Soares M.B."/>
            <person name="Knudson D.L."/>
            <person name="Lee N.H."/>
            <person name="Galagan J."/>
            <person name="Salzberg S.L."/>
            <person name="Paulsen I.T."/>
            <person name="Dimopoulos G."/>
            <person name="Collins F.H."/>
            <person name="Bruce B."/>
            <person name="Fraser-Liggett C.M."/>
            <person name="Severson D.W."/>
        </authorList>
    </citation>
    <scope>NUCLEOTIDE SEQUENCE [LARGE SCALE GENOMIC DNA]</scope>
    <source>
        <strain>LVPib12</strain>
    </source>
</reference>